<feature type="signal peptide" evidence="1">
    <location>
        <begin position="1"/>
        <end position="27"/>
    </location>
</feature>
<feature type="chain" id="PRO_5008207791" description="FAD-linked oxidoreductase ZEB1">
    <location>
        <begin position="28"/>
        <end position="565"/>
    </location>
</feature>
<feature type="domain" description="FAD-binding PCMH-type" evidence="3">
    <location>
        <begin position="115"/>
        <end position="293"/>
    </location>
</feature>
<feature type="glycosylation site" description="N-linked (GlcNAc...) asparagine" evidence="2">
    <location>
        <position position="46"/>
    </location>
</feature>
<feature type="glycosylation site" description="N-linked (GlcNAc...) asparagine" evidence="2">
    <location>
        <position position="82"/>
    </location>
</feature>
<feature type="glycosylation site" description="N-linked (GlcNAc...) asparagine" evidence="2">
    <location>
        <position position="100"/>
    </location>
</feature>
<feature type="glycosylation site" description="N-linked (GlcNAc...) asparagine" evidence="2">
    <location>
        <position position="340"/>
    </location>
</feature>
<feature type="glycosylation site" description="N-linked (GlcNAc...) asparagine" evidence="2">
    <location>
        <position position="352"/>
    </location>
</feature>
<feature type="glycosylation site" description="N-linked (GlcNAc...) asparagine" evidence="2">
    <location>
        <position position="421"/>
    </location>
</feature>
<reference key="1">
    <citation type="journal article" date="2005" name="Mol. Microbiol.">
        <title>Two different polyketide synthase genes are required for synthesis of zearalenone in Gibberella zeae.</title>
        <authorList>
            <person name="Kim Y.T."/>
            <person name="Lee Y.R."/>
            <person name="Jin J."/>
            <person name="Han K.H."/>
            <person name="Kim H."/>
            <person name="Kim J.C."/>
            <person name="Lee T."/>
            <person name="Yun S.H."/>
            <person name="Lee Y.W."/>
        </authorList>
    </citation>
    <scope>NUCLEOTIDE SEQUENCE [GENOMIC DNA]</scope>
    <scope>FUNCTION</scope>
    <scope>DISRUPTION PHENOTYPE</scope>
    <scope>INDUCTION</scope>
    <scope>PATHWAY</scope>
    <source>
        <strain>ATCC MYA-4620 / CBS 123657 / FGSC 9075 / NRRL 31084 / PH-1</strain>
    </source>
</reference>
<reference key="2">
    <citation type="journal article" date="2007" name="Science">
        <title>The Fusarium graminearum genome reveals a link between localized polymorphism and pathogen specialization.</title>
        <authorList>
            <person name="Cuomo C.A."/>
            <person name="Gueldener U."/>
            <person name="Xu J.-R."/>
            <person name="Trail F."/>
            <person name="Turgeon B.G."/>
            <person name="Di Pietro A."/>
            <person name="Walton J.D."/>
            <person name="Ma L.-J."/>
            <person name="Baker S.E."/>
            <person name="Rep M."/>
            <person name="Adam G."/>
            <person name="Antoniw J."/>
            <person name="Baldwin T."/>
            <person name="Calvo S.E."/>
            <person name="Chang Y.-L."/>
            <person name="DeCaprio D."/>
            <person name="Gale L.R."/>
            <person name="Gnerre S."/>
            <person name="Goswami R.S."/>
            <person name="Hammond-Kosack K."/>
            <person name="Harris L.J."/>
            <person name="Hilburn K."/>
            <person name="Kennell J.C."/>
            <person name="Kroken S."/>
            <person name="Magnuson J.K."/>
            <person name="Mannhaupt G."/>
            <person name="Mauceli E.W."/>
            <person name="Mewes H.-W."/>
            <person name="Mitterbauer R."/>
            <person name="Muehlbauer G."/>
            <person name="Muensterkoetter M."/>
            <person name="Nelson D."/>
            <person name="O'Donnell K."/>
            <person name="Ouellet T."/>
            <person name="Qi W."/>
            <person name="Quesneville H."/>
            <person name="Roncero M.I.G."/>
            <person name="Seong K.-Y."/>
            <person name="Tetko I.V."/>
            <person name="Urban M."/>
            <person name="Waalwijk C."/>
            <person name="Ward T.J."/>
            <person name="Yao J."/>
            <person name="Birren B.W."/>
            <person name="Kistler H.C."/>
        </authorList>
    </citation>
    <scope>NUCLEOTIDE SEQUENCE [LARGE SCALE GENOMIC DNA]</scope>
    <source>
        <strain>ATCC MYA-4620 / CBS 123657 / FGSC 9075 / NRRL 31084 / PH-1</strain>
    </source>
</reference>
<reference key="3">
    <citation type="journal article" date="2010" name="Nature">
        <title>Comparative genomics reveals mobile pathogenicity chromosomes in Fusarium.</title>
        <authorList>
            <person name="Ma L.-J."/>
            <person name="van der Does H.C."/>
            <person name="Borkovich K.A."/>
            <person name="Coleman J.J."/>
            <person name="Daboussi M.-J."/>
            <person name="Di Pietro A."/>
            <person name="Dufresne M."/>
            <person name="Freitag M."/>
            <person name="Grabherr M."/>
            <person name="Henrissat B."/>
            <person name="Houterman P.M."/>
            <person name="Kang S."/>
            <person name="Shim W.-B."/>
            <person name="Woloshuk C."/>
            <person name="Xie X."/>
            <person name="Xu J.-R."/>
            <person name="Antoniw J."/>
            <person name="Baker S.E."/>
            <person name="Bluhm B.H."/>
            <person name="Breakspear A."/>
            <person name="Brown D.W."/>
            <person name="Butchko R.A.E."/>
            <person name="Chapman S."/>
            <person name="Coulson R."/>
            <person name="Coutinho P.M."/>
            <person name="Danchin E.G.J."/>
            <person name="Diener A."/>
            <person name="Gale L.R."/>
            <person name="Gardiner D.M."/>
            <person name="Goff S."/>
            <person name="Hammond-Kosack K.E."/>
            <person name="Hilburn K."/>
            <person name="Hua-Van A."/>
            <person name="Jonkers W."/>
            <person name="Kazan K."/>
            <person name="Kodira C.D."/>
            <person name="Koehrsen M."/>
            <person name="Kumar L."/>
            <person name="Lee Y.-H."/>
            <person name="Li L."/>
            <person name="Manners J.M."/>
            <person name="Miranda-Saavedra D."/>
            <person name="Mukherjee M."/>
            <person name="Park G."/>
            <person name="Park J."/>
            <person name="Park S.-Y."/>
            <person name="Proctor R.H."/>
            <person name="Regev A."/>
            <person name="Ruiz-Roldan M.C."/>
            <person name="Sain D."/>
            <person name="Sakthikumar S."/>
            <person name="Sykes S."/>
            <person name="Schwartz D.C."/>
            <person name="Turgeon B.G."/>
            <person name="Wapinski I."/>
            <person name="Yoder O."/>
            <person name="Young S."/>
            <person name="Zeng Q."/>
            <person name="Zhou S."/>
            <person name="Galagan J."/>
            <person name="Cuomo C.A."/>
            <person name="Kistler H.C."/>
            <person name="Rep M."/>
        </authorList>
    </citation>
    <scope>GENOME REANNOTATION</scope>
    <source>
        <strain>ATCC MYA-4620 / CBS 123657 / FGSC 9075 / NRRL 31084 / PH-1</strain>
    </source>
</reference>
<reference key="4">
    <citation type="journal article" date="2015" name="BMC Genomics">
        <title>The completed genome sequence of the pathogenic ascomycete fungus Fusarium graminearum.</title>
        <authorList>
            <person name="King R."/>
            <person name="Urban M."/>
            <person name="Hammond-Kosack M.C.U."/>
            <person name="Hassani-Pak K."/>
            <person name="Hammond-Kosack K.E."/>
        </authorList>
    </citation>
    <scope>NUCLEOTIDE SEQUENCE [LARGE SCALE GENOMIC DNA]</scope>
    <source>
        <strain>ATCC MYA-4620 / CBS 123657 / FGSC 9075 / NRRL 31084 / PH-1</strain>
    </source>
</reference>
<reference key="5">
    <citation type="journal article" date="2006" name="Appl. Environ. Microbiol.">
        <title>Characterization of two polyketide synthase genes involved in zearalenone biosynthesis in Gibberella zeae.</title>
        <authorList>
            <person name="Gaffoor I."/>
            <person name="Trail F."/>
        </authorList>
    </citation>
    <scope>FUNCTION</scope>
</reference>
<reference key="6">
    <citation type="journal article" date="2006" name="Appl. Environ. Microbiol.">
        <title>The PKS4 gene of Fusarium graminearum is essential for zearalenone production.</title>
        <authorList>
            <person name="Lysoee E."/>
            <person name="Klemsdal S.S."/>
            <person name="Bone K.R."/>
            <person name="Frandsen R.J."/>
            <person name="Johansen T."/>
            <person name="Thrane U."/>
            <person name="Giese H."/>
        </authorList>
    </citation>
    <scope>FUNCTION</scope>
</reference>
<reference key="7">
    <citation type="journal article" date="2008" name="Proc. Natl. Acad. Sci. U.S.A.">
        <title>A polyketide macrolactone synthase from the filamentous fungus Gibberella zeae.</title>
        <authorList>
            <person name="Zhou H."/>
            <person name="Zhan J."/>
            <person name="Watanabe K."/>
            <person name="Xie X."/>
            <person name="Tang Y."/>
        </authorList>
    </citation>
    <scope>FUNCTION</scope>
</reference>
<dbReference type="EC" id="1.-.-.-" evidence="10"/>
<dbReference type="EMBL" id="DQ019316">
    <property type="protein sequence ID" value="ABB90284.1"/>
    <property type="molecule type" value="Genomic_DNA"/>
</dbReference>
<dbReference type="EMBL" id="DS231663">
    <property type="protein sequence ID" value="ESU07827.1"/>
    <property type="status" value="ALT_SEQ"/>
    <property type="molecule type" value="Genomic_DNA"/>
</dbReference>
<dbReference type="EMBL" id="HG970332">
    <property type="protein sequence ID" value="CEF74681.1"/>
    <property type="status" value="ALT_SEQ"/>
    <property type="molecule type" value="Genomic_DNA"/>
</dbReference>
<dbReference type="RefSeq" id="XP_011318312.1">
    <property type="nucleotide sequence ID" value="XM_011320010.1"/>
</dbReference>
<dbReference type="SMR" id="A0A0E0RTV6"/>
<dbReference type="STRING" id="229533.A0A0E0RTV6"/>
<dbReference type="GlyCosmos" id="A0A0E0RTV6">
    <property type="glycosylation" value="6 sites, No reported glycans"/>
</dbReference>
<dbReference type="GeneID" id="23549775"/>
<dbReference type="KEGG" id="fgr:FGSG_02397"/>
<dbReference type="eggNOG" id="ENOG502R8I5">
    <property type="taxonomic scope" value="Eukaryota"/>
</dbReference>
<dbReference type="InParanoid" id="A0A0E0RTV6"/>
<dbReference type="OrthoDB" id="27902at110618"/>
<dbReference type="PHI-base" id="PHI:716"/>
<dbReference type="Proteomes" id="UP000070720">
    <property type="component" value="Chromosome 1"/>
</dbReference>
<dbReference type="GO" id="GO:0071949">
    <property type="term" value="F:FAD binding"/>
    <property type="evidence" value="ECO:0007669"/>
    <property type="project" value="InterPro"/>
</dbReference>
<dbReference type="GO" id="GO:0016491">
    <property type="term" value="F:oxidoreductase activity"/>
    <property type="evidence" value="ECO:0000315"/>
    <property type="project" value="UniProt"/>
</dbReference>
<dbReference type="GO" id="GO:0016218">
    <property type="term" value="F:polyketide synthase activity"/>
    <property type="evidence" value="ECO:0000315"/>
    <property type="project" value="UniProt"/>
</dbReference>
<dbReference type="GO" id="GO:0106150">
    <property type="term" value="P:zearalenone biosynthetic process"/>
    <property type="evidence" value="ECO:0000315"/>
    <property type="project" value="GO_Central"/>
</dbReference>
<dbReference type="Gene3D" id="3.30.465.10">
    <property type="match status" value="2"/>
</dbReference>
<dbReference type="InterPro" id="IPR012951">
    <property type="entry name" value="BBE"/>
</dbReference>
<dbReference type="InterPro" id="IPR016166">
    <property type="entry name" value="FAD-bd_PCMH"/>
</dbReference>
<dbReference type="InterPro" id="IPR036318">
    <property type="entry name" value="FAD-bd_PCMH-like_sf"/>
</dbReference>
<dbReference type="InterPro" id="IPR016169">
    <property type="entry name" value="FAD-bd_PCMH_sub2"/>
</dbReference>
<dbReference type="InterPro" id="IPR050432">
    <property type="entry name" value="FAD-linked_Oxidoreductases_BP"/>
</dbReference>
<dbReference type="InterPro" id="IPR006094">
    <property type="entry name" value="Oxid_FAD_bind_N"/>
</dbReference>
<dbReference type="PANTHER" id="PTHR13878:SF91">
    <property type="entry name" value="FAD BINDING DOMAIN PROTEIN (AFU_ORTHOLOGUE AFUA_6G12070)-RELATED"/>
    <property type="match status" value="1"/>
</dbReference>
<dbReference type="PANTHER" id="PTHR13878">
    <property type="entry name" value="GULONOLACTONE OXIDASE"/>
    <property type="match status" value="1"/>
</dbReference>
<dbReference type="Pfam" id="PF08031">
    <property type="entry name" value="BBE"/>
    <property type="match status" value="1"/>
</dbReference>
<dbReference type="Pfam" id="PF01565">
    <property type="entry name" value="FAD_binding_4"/>
    <property type="match status" value="1"/>
</dbReference>
<dbReference type="SUPFAM" id="SSF56176">
    <property type="entry name" value="FAD-binding/transporter-associated domain-like"/>
    <property type="match status" value="1"/>
</dbReference>
<dbReference type="PROSITE" id="PS51387">
    <property type="entry name" value="FAD_PCMH"/>
    <property type="match status" value="1"/>
</dbReference>
<gene>
    <name evidence="8" type="primary">ZEB1</name>
    <name type="ORF">FGRAMPH1_01T05753</name>
    <name type="ORF">FGSG_02397</name>
</gene>
<evidence type="ECO:0000255" key="1"/>
<evidence type="ECO:0000255" key="2">
    <source>
        <dbReference type="PROSITE-ProRule" id="PRU00498"/>
    </source>
</evidence>
<evidence type="ECO:0000255" key="3">
    <source>
        <dbReference type="PROSITE-ProRule" id="PRU00718"/>
    </source>
</evidence>
<evidence type="ECO:0000269" key="4">
    <source>
    </source>
</evidence>
<evidence type="ECO:0000269" key="5">
    <source>
    </source>
</evidence>
<evidence type="ECO:0000269" key="6">
    <source>
    </source>
</evidence>
<evidence type="ECO:0000269" key="7">
    <source>
    </source>
</evidence>
<evidence type="ECO:0000303" key="8">
    <source>
    </source>
</evidence>
<evidence type="ECO:0000305" key="9"/>
<evidence type="ECO:0000305" key="10">
    <source>
    </source>
</evidence>
<keyword id="KW-0274">FAD</keyword>
<keyword id="KW-0285">Flavoprotein</keyword>
<keyword id="KW-0325">Glycoprotein</keyword>
<keyword id="KW-0560">Oxidoreductase</keyword>
<keyword id="KW-1185">Reference proteome</keyword>
<keyword id="KW-0732">Signal</keyword>
<proteinExistence type="evidence at transcript level"/>
<accession>A0A0E0RTV6</accession>
<accession>I1RFC5</accession>
<accession>Q2VLJ1</accession>
<name>ZEB1_GIBZE</name>
<sequence>MKLSPSKYLPVLLGTLSLTIANPSADCKCFPGDDCWPSAAEWKALNTSVSGNLIKTVPLGAPCHDPMFKGDVCQSLRQQWQNATIHFASSSSVMAPFFANQSCDPFQPRIRPCELGNYVSYAIAAETTSDVQNAIAFARANHIRLVIRNTGHDYLGRSTGAGALGVWTHHLKNIEFVDWDDDTYTGNAVKLGAGVQGFEVLEAARSRGLVVVGGECPTVGIAGGYSQGGGHSALSTSFGLSVDNVLSWEVITAKGELLTVNKDENPDLFWALRGGGGGTFGVVISMTVKAHPGTITSGASLSFSTDTNSEEAFWAGIQVFQDTLEDMVDAGTMVIHIITNTSFLIAPLTAYNKTEAQVKVIMKPFISSLTSKHVDFDVTYKESKTYYDHYNEFLGPLPYGKIRVGFEQYGGRLIPRSVVPNFTETLRQVTNMGVTWVGVATDVGPFGTRATTSVHPAWRSTLVHALLSTPWDFTKPWHDMIKLQDLMTNVIMPKVEAVTPGSGAYVNEADFRQPNYQDVFWGDNYKDLLEVKEKWDPEHFFFVPKGVGSEIWSIAEDGRMCKSAL</sequence>
<comment type="function">
    <text evidence="4 5 6 7">FAD-linked oxidoreductase; part of the gene cluster that mediates the biosynthesis of zearalenone (ZEA), a nonsteroid estrogen that is a contaminant of cereal grains and causes estrogenic disorders in humans and animals (PubMed:16262793, PubMed:16517624, PubMed:18427109). The ZEA backbone is synthesized from a single acetyl-CoA molecule and eight malonyl-CoA molecules (PubMed:16262793, PubMed:16517624, PubMed:18427109). The reducing polyketide synthase ZEA2 is proposed to synthesize a reduced hexaketide intermediate by using different combinations of its reductive domains during each round of condensation (PubMed:16262793, PubMed:16517624, PubMed:16751498, PubMed:18427109). The hexaketide thioester is then transacylated to the non-reducing polyketide synthase ZEA1 and is further condensed with three malonyl-CoAs without reductive tailoring to yield a mixed reduced/unreduced nonaketide (PubMed:16262793, PubMed:16517624, PubMed:18427109). ZEA1 must be able to interact with ZEA2 to facilitate starter-unit acyltransfer and initiate polyketide biosynthesis (PubMed:18427109). ZEA1 also mediates the required C2-C7 cyclization to form the resorcylate core and catalyzes the formation of the macrolactone (PubMed:18427109). ZEB1 is then responsible for the chemical conversion of beta-zearalenonol (beta-ZOL) to ZEA in the biosynthetic pathway (PubMed:16262793).</text>
</comment>
<comment type="pathway">
    <text evidence="4">Mycotoxin biosynthesis.</text>
</comment>
<comment type="induction">
    <text evidence="4">Expression is positively regulated by the zearalenone biosynthesis specific transcription factor ZEB2 (PubMed:16262793). Conditions for carbon-, nitrogen-, or phosphorus-starvations lead to very low expression (PubMed:16262793). Increase in pH results in gradual reduction of the gene expression (PubMed:16262793).</text>
</comment>
<comment type="disruption phenotype">
    <text evidence="4">Results in the loss of zearalenone production but still produces beta-zearalenonol (PubMed:16262793).</text>
</comment>
<comment type="similarity">
    <text evidence="9">Belongs to the oxygen-dependent FAD-linked oxidoreductase family.</text>
</comment>
<comment type="sequence caution" evidence="9">
    <conflict type="erroneous gene model prediction">
        <sequence resource="EMBL-CDS" id="CEF74681"/>
    </conflict>
</comment>
<comment type="sequence caution" evidence="9">
    <conflict type="erroneous gene model prediction">
        <sequence resource="EMBL-CDS" id="ESU07827"/>
    </conflict>
</comment>
<organism>
    <name type="scientific">Gibberella zeae (strain ATCC MYA-4620 / CBS 123657 / FGSC 9075 / NRRL 31084 / PH-1)</name>
    <name type="common">Wheat head blight fungus</name>
    <name type="synonym">Fusarium graminearum</name>
    <dbReference type="NCBI Taxonomy" id="229533"/>
    <lineage>
        <taxon>Eukaryota</taxon>
        <taxon>Fungi</taxon>
        <taxon>Dikarya</taxon>
        <taxon>Ascomycota</taxon>
        <taxon>Pezizomycotina</taxon>
        <taxon>Sordariomycetes</taxon>
        <taxon>Hypocreomycetidae</taxon>
        <taxon>Hypocreales</taxon>
        <taxon>Nectriaceae</taxon>
        <taxon>Fusarium</taxon>
    </lineage>
</organism>
<protein>
    <recommendedName>
        <fullName evidence="8">FAD-linked oxidoreductase ZEB1</fullName>
        <ecNumber evidence="10">1.-.-.-</ecNumber>
    </recommendedName>
    <alternativeName>
        <fullName evidence="8">Zearalenone biosynthesis protein 1</fullName>
    </alternativeName>
</protein>